<evidence type="ECO:0000250" key="1">
    <source>
        <dbReference type="UniProtKB" id="Q9Y8A5"/>
    </source>
</evidence>
<evidence type="ECO:0000255" key="2"/>
<evidence type="ECO:0000255" key="3">
    <source>
        <dbReference type="PROSITE-ProRule" id="PRU00258"/>
    </source>
</evidence>
<evidence type="ECO:0000255" key="4">
    <source>
        <dbReference type="PROSITE-ProRule" id="PRU01348"/>
    </source>
</evidence>
<evidence type="ECO:0000255" key="5">
    <source>
        <dbReference type="PROSITE-ProRule" id="PRU01363"/>
    </source>
</evidence>
<evidence type="ECO:0000255" key="6">
    <source>
        <dbReference type="PROSITE-ProRule" id="PRU10022"/>
    </source>
</evidence>
<evidence type="ECO:0000269" key="7">
    <source>
    </source>
</evidence>
<evidence type="ECO:0000269" key="8">
    <source>
    </source>
</evidence>
<evidence type="ECO:0000269" key="9">
    <source>
    </source>
</evidence>
<evidence type="ECO:0000269" key="10">
    <source>
    </source>
</evidence>
<evidence type="ECO:0000269" key="11">
    <source>
    </source>
</evidence>
<evidence type="ECO:0000269" key="12">
    <source>
    </source>
</evidence>
<evidence type="ECO:0000303" key="13">
    <source>
    </source>
</evidence>
<evidence type="ECO:0000303" key="14">
    <source>
    </source>
</evidence>
<evidence type="ECO:0000305" key="15"/>
<evidence type="ECO:0000305" key="16">
    <source>
    </source>
</evidence>
<proteinExistence type="evidence at transcript level"/>
<protein>
    <recommendedName>
        <fullName evidence="13">Highly reducing polyketide synthase ACTTS3</fullName>
        <shortName evidence="15">HR-PKS ACTTS3</shortName>
        <ecNumber evidence="16">2.3.1.-</ecNumber>
    </recommendedName>
    <alternativeName>
        <fullName evidence="13">ACT-toxin biosynthesis protein S3</fullName>
    </alternativeName>
</protein>
<name>ACTS3_ALTAL</name>
<feature type="chain" id="PRO_0000444855" description="Highly reducing polyketide synthase ACTTS3">
    <location>
        <begin position="1"/>
        <end position="2457"/>
    </location>
</feature>
<feature type="domain" description="Ketosynthase family 3 (KS3)" evidence="4">
    <location>
        <begin position="5"/>
        <end position="435"/>
    </location>
</feature>
<feature type="domain" description="PKS/mFAS DH" evidence="5">
    <location>
        <begin position="938"/>
        <end position="1246"/>
    </location>
</feature>
<feature type="domain" description="Carrier" evidence="3">
    <location>
        <begin position="2374"/>
        <end position="2451"/>
    </location>
</feature>
<feature type="region of interest" description="Malonyl-CoA:ACP transacylase (MAT) domain" evidence="2">
    <location>
        <begin position="545"/>
        <end position="856"/>
    </location>
</feature>
<feature type="region of interest" description="Dehydratase (DH) domain" evidence="2">
    <location>
        <begin position="938"/>
        <end position="1244"/>
    </location>
</feature>
<feature type="region of interest" description="N-terminal hotdog fold" evidence="5">
    <location>
        <begin position="938"/>
        <end position="1078"/>
    </location>
</feature>
<feature type="region of interest" description="C-terminal hotdog fold" evidence="5">
    <location>
        <begin position="1091"/>
        <end position="1246"/>
    </location>
</feature>
<feature type="region of interest" description="Methyltransferase (CMet) domain" evidence="2">
    <location>
        <begin position="1399"/>
        <end position="1587"/>
    </location>
</feature>
<feature type="region of interest" description="Ketoreductase (KR) domain" evidence="2">
    <location>
        <begin position="2085"/>
        <end position="2281"/>
    </location>
</feature>
<feature type="active site" description="For beta-ketoacyl synthase activity" evidence="4">
    <location>
        <position position="179"/>
    </location>
</feature>
<feature type="active site" description="For beta-ketoacyl synthase activity" evidence="4">
    <location>
        <position position="316"/>
    </location>
</feature>
<feature type="active site" description="For beta-ketoacyl synthase activity" evidence="4">
    <location>
        <position position="356"/>
    </location>
</feature>
<feature type="active site" description="For malonyltransferase activity" evidence="6">
    <location>
        <position position="641"/>
    </location>
</feature>
<feature type="active site" description="Proton acceptor; for dehydratase activity" evidence="5">
    <location>
        <position position="970"/>
    </location>
</feature>
<feature type="active site" description="Proton donor; for dehydratase activity" evidence="5">
    <location>
        <position position="1152"/>
    </location>
</feature>
<feature type="modified residue" description="O-(pantetheine 4'-phosphoryl)serine" evidence="3">
    <location>
        <position position="2411"/>
    </location>
</feature>
<organism>
    <name type="scientific">Alternaria alternata</name>
    <name type="common">Alternaria rot fungus</name>
    <name type="synonym">Torula alternata</name>
    <dbReference type="NCBI Taxonomy" id="5599"/>
    <lineage>
        <taxon>Eukaryota</taxon>
        <taxon>Fungi</taxon>
        <taxon>Dikarya</taxon>
        <taxon>Ascomycota</taxon>
        <taxon>Pezizomycotina</taxon>
        <taxon>Dothideomycetes</taxon>
        <taxon>Pleosporomycetidae</taxon>
        <taxon>Pleosporales</taxon>
        <taxon>Pleosporineae</taxon>
        <taxon>Pleosporaceae</taxon>
        <taxon>Alternaria</taxon>
        <taxon>Alternaria sect. Alternaria</taxon>
        <taxon>Alternaria alternata complex</taxon>
    </lineage>
</organism>
<dbReference type="EC" id="2.3.1.-" evidence="16"/>
<dbReference type="EMBL" id="AB516321">
    <property type="protein sequence ID" value="BAJ14522.1"/>
    <property type="molecule type" value="Genomic_DNA"/>
</dbReference>
<dbReference type="SMR" id="D9N1A1"/>
<dbReference type="VEuPathDB" id="FungiDB:CC77DRAFT_176278"/>
<dbReference type="GO" id="GO:0004315">
    <property type="term" value="F:3-oxoacyl-[acyl-carrier-protein] synthase activity"/>
    <property type="evidence" value="ECO:0007669"/>
    <property type="project" value="InterPro"/>
</dbReference>
<dbReference type="GO" id="GO:0004312">
    <property type="term" value="F:fatty acid synthase activity"/>
    <property type="evidence" value="ECO:0007669"/>
    <property type="project" value="TreeGrafter"/>
</dbReference>
<dbReference type="GO" id="GO:0008168">
    <property type="term" value="F:methyltransferase activity"/>
    <property type="evidence" value="ECO:0007669"/>
    <property type="project" value="UniProtKB-KW"/>
</dbReference>
<dbReference type="GO" id="GO:0016491">
    <property type="term" value="F:oxidoreductase activity"/>
    <property type="evidence" value="ECO:0007669"/>
    <property type="project" value="UniProtKB-KW"/>
</dbReference>
<dbReference type="GO" id="GO:0031177">
    <property type="term" value="F:phosphopantetheine binding"/>
    <property type="evidence" value="ECO:0007669"/>
    <property type="project" value="InterPro"/>
</dbReference>
<dbReference type="GO" id="GO:0006633">
    <property type="term" value="P:fatty acid biosynthetic process"/>
    <property type="evidence" value="ECO:0007669"/>
    <property type="project" value="InterPro"/>
</dbReference>
<dbReference type="GO" id="GO:0032259">
    <property type="term" value="P:methylation"/>
    <property type="evidence" value="ECO:0007669"/>
    <property type="project" value="UniProtKB-KW"/>
</dbReference>
<dbReference type="GO" id="GO:0044550">
    <property type="term" value="P:secondary metabolite biosynthetic process"/>
    <property type="evidence" value="ECO:0007669"/>
    <property type="project" value="TreeGrafter"/>
</dbReference>
<dbReference type="CDD" id="cd02440">
    <property type="entry name" value="AdoMet_MTases"/>
    <property type="match status" value="1"/>
</dbReference>
<dbReference type="CDD" id="cd00833">
    <property type="entry name" value="PKS"/>
    <property type="match status" value="1"/>
</dbReference>
<dbReference type="FunFam" id="3.40.47.10:FF:000019">
    <property type="entry name" value="Polyketide synthase type I"/>
    <property type="match status" value="1"/>
</dbReference>
<dbReference type="Gene3D" id="3.40.47.10">
    <property type="match status" value="1"/>
</dbReference>
<dbReference type="Gene3D" id="1.10.1200.10">
    <property type="entry name" value="ACP-like"/>
    <property type="match status" value="1"/>
</dbReference>
<dbReference type="Gene3D" id="3.40.366.10">
    <property type="entry name" value="Malonyl-Coenzyme A Acyl Carrier Protein, domain 2"/>
    <property type="match status" value="1"/>
</dbReference>
<dbReference type="Gene3D" id="3.40.50.720">
    <property type="entry name" value="NAD(P)-binding Rossmann-like Domain"/>
    <property type="match status" value="1"/>
</dbReference>
<dbReference type="Gene3D" id="3.10.129.110">
    <property type="entry name" value="Polyketide synthase dehydratase"/>
    <property type="match status" value="1"/>
</dbReference>
<dbReference type="Gene3D" id="3.40.50.150">
    <property type="entry name" value="Vaccinia Virus protein VP39"/>
    <property type="match status" value="1"/>
</dbReference>
<dbReference type="InterPro" id="IPR001227">
    <property type="entry name" value="Ac_transferase_dom_sf"/>
</dbReference>
<dbReference type="InterPro" id="IPR036736">
    <property type="entry name" value="ACP-like_sf"/>
</dbReference>
<dbReference type="InterPro" id="IPR014043">
    <property type="entry name" value="Acyl_transferase_dom"/>
</dbReference>
<dbReference type="InterPro" id="IPR016035">
    <property type="entry name" value="Acyl_Trfase/lysoPLipase"/>
</dbReference>
<dbReference type="InterPro" id="IPR018201">
    <property type="entry name" value="Ketoacyl_synth_AS"/>
</dbReference>
<dbReference type="InterPro" id="IPR014031">
    <property type="entry name" value="Ketoacyl_synth_C"/>
</dbReference>
<dbReference type="InterPro" id="IPR014030">
    <property type="entry name" value="Ketoacyl_synth_N"/>
</dbReference>
<dbReference type="InterPro" id="IPR016036">
    <property type="entry name" value="Malonyl_transacylase_ACP-bd"/>
</dbReference>
<dbReference type="InterPro" id="IPR013217">
    <property type="entry name" value="Methyltransf_12"/>
</dbReference>
<dbReference type="InterPro" id="IPR036291">
    <property type="entry name" value="NAD(P)-bd_dom_sf"/>
</dbReference>
<dbReference type="InterPro" id="IPR032821">
    <property type="entry name" value="PKS_assoc"/>
</dbReference>
<dbReference type="InterPro" id="IPR020841">
    <property type="entry name" value="PKS_Beta-ketoAc_synthase_dom"/>
</dbReference>
<dbReference type="InterPro" id="IPR042104">
    <property type="entry name" value="PKS_dehydratase_sf"/>
</dbReference>
<dbReference type="InterPro" id="IPR020807">
    <property type="entry name" value="PKS_DH"/>
</dbReference>
<dbReference type="InterPro" id="IPR049551">
    <property type="entry name" value="PKS_DH_C"/>
</dbReference>
<dbReference type="InterPro" id="IPR049552">
    <property type="entry name" value="PKS_DH_N"/>
</dbReference>
<dbReference type="InterPro" id="IPR013968">
    <property type="entry name" value="PKS_KR"/>
</dbReference>
<dbReference type="InterPro" id="IPR049900">
    <property type="entry name" value="PKS_mFAS_DH"/>
</dbReference>
<dbReference type="InterPro" id="IPR050091">
    <property type="entry name" value="PKS_NRPS_Biosynth_Enz"/>
</dbReference>
<dbReference type="InterPro" id="IPR020806">
    <property type="entry name" value="PKS_PP-bd"/>
</dbReference>
<dbReference type="InterPro" id="IPR009081">
    <property type="entry name" value="PP-bd_ACP"/>
</dbReference>
<dbReference type="InterPro" id="IPR029063">
    <property type="entry name" value="SAM-dependent_MTases_sf"/>
</dbReference>
<dbReference type="InterPro" id="IPR016039">
    <property type="entry name" value="Thiolase-like"/>
</dbReference>
<dbReference type="PANTHER" id="PTHR43775">
    <property type="entry name" value="FATTY ACID SYNTHASE"/>
    <property type="match status" value="1"/>
</dbReference>
<dbReference type="PANTHER" id="PTHR43775:SF20">
    <property type="entry name" value="HYBRID PKS-NRPS SYNTHETASE APDA"/>
    <property type="match status" value="1"/>
</dbReference>
<dbReference type="Pfam" id="PF00698">
    <property type="entry name" value="Acyl_transf_1"/>
    <property type="match status" value="1"/>
</dbReference>
<dbReference type="Pfam" id="PF16197">
    <property type="entry name" value="KAsynt_C_assoc"/>
    <property type="match status" value="1"/>
</dbReference>
<dbReference type="Pfam" id="PF00109">
    <property type="entry name" value="ketoacyl-synt"/>
    <property type="match status" value="1"/>
</dbReference>
<dbReference type="Pfam" id="PF02801">
    <property type="entry name" value="Ketoacyl-synt_C"/>
    <property type="match status" value="1"/>
</dbReference>
<dbReference type="Pfam" id="PF08659">
    <property type="entry name" value="KR"/>
    <property type="match status" value="1"/>
</dbReference>
<dbReference type="Pfam" id="PF08242">
    <property type="entry name" value="Methyltransf_12"/>
    <property type="match status" value="1"/>
</dbReference>
<dbReference type="Pfam" id="PF21089">
    <property type="entry name" value="PKS_DH_N"/>
    <property type="match status" value="1"/>
</dbReference>
<dbReference type="Pfam" id="PF00550">
    <property type="entry name" value="PP-binding"/>
    <property type="match status" value="1"/>
</dbReference>
<dbReference type="Pfam" id="PF14765">
    <property type="entry name" value="PS-DH"/>
    <property type="match status" value="1"/>
</dbReference>
<dbReference type="SMART" id="SM00827">
    <property type="entry name" value="PKS_AT"/>
    <property type="match status" value="1"/>
</dbReference>
<dbReference type="SMART" id="SM00826">
    <property type="entry name" value="PKS_DH"/>
    <property type="match status" value="1"/>
</dbReference>
<dbReference type="SMART" id="SM00822">
    <property type="entry name" value="PKS_KR"/>
    <property type="match status" value="1"/>
</dbReference>
<dbReference type="SMART" id="SM00825">
    <property type="entry name" value="PKS_KS"/>
    <property type="match status" value="1"/>
</dbReference>
<dbReference type="SMART" id="SM00823">
    <property type="entry name" value="PKS_PP"/>
    <property type="match status" value="1"/>
</dbReference>
<dbReference type="SUPFAM" id="SSF47336">
    <property type="entry name" value="ACP-like"/>
    <property type="match status" value="1"/>
</dbReference>
<dbReference type="SUPFAM" id="SSF52151">
    <property type="entry name" value="FabD/lysophospholipase-like"/>
    <property type="match status" value="1"/>
</dbReference>
<dbReference type="SUPFAM" id="SSF51735">
    <property type="entry name" value="NAD(P)-binding Rossmann-fold domains"/>
    <property type="match status" value="1"/>
</dbReference>
<dbReference type="SUPFAM" id="SSF55048">
    <property type="entry name" value="Probable ACP-binding domain of malonyl-CoA ACP transacylase"/>
    <property type="match status" value="1"/>
</dbReference>
<dbReference type="SUPFAM" id="SSF53335">
    <property type="entry name" value="S-adenosyl-L-methionine-dependent methyltransferases"/>
    <property type="match status" value="1"/>
</dbReference>
<dbReference type="SUPFAM" id="SSF53901">
    <property type="entry name" value="Thiolase-like"/>
    <property type="match status" value="1"/>
</dbReference>
<dbReference type="PROSITE" id="PS50075">
    <property type="entry name" value="CARRIER"/>
    <property type="match status" value="1"/>
</dbReference>
<dbReference type="PROSITE" id="PS00606">
    <property type="entry name" value="KS3_1"/>
    <property type="match status" value="1"/>
</dbReference>
<dbReference type="PROSITE" id="PS52004">
    <property type="entry name" value="KS3_2"/>
    <property type="match status" value="1"/>
</dbReference>
<dbReference type="PROSITE" id="PS52019">
    <property type="entry name" value="PKS_MFAS_DH"/>
    <property type="match status" value="1"/>
</dbReference>
<sequence>MTPLREPIAVIGSACRFPGGANSPHKLWELLRDPRDILREFPDDRLVLSKFYNGNANHHGSTNVRNRSYLLSEDIRAFDAPFFHINPREADGMDPAQRILLEAVYEALEAAGYTMEQMQGTHTSVFVGVMNSDWWDLQMRDTETIATHAATGTARSIVSNRISYVFDLKGVSMTIDTACSSSLVALHQAVQSLRSGESTAAIVGGANILLDPAMYIAESTLQMLSPESRSRMWDKSANGYARGEGCAAVFLKPLTRAIADGDHIECVIRETGVSSDGRTQGITMPSAAAQAALIKSTYRSAGLDPLADRCQYFECHGTGTPAGDPIEAQAIAEAFFSHSGEDAEIYVGSIKTVIGHLEGCAGLAGLLKASLAIQNRTIPANMLFNDLNPLIGPYYRNLKILQAAKPWPQDIHGPRRASVNSFGFGGTNAHVILESYEPEMQGTHVLQERSFHGPLTFSACSKSSLLATISNFTSYIKTNPAVDLQNLAWVLQRKRTEFPVKQHFSGSTHARLIESMEAYLQNAGSSGLHNTTIDTKLLYPSEIPRVLGIFTGQGAQWATMGKEFIQNSYLFRESIDRSEAALVALPDPPSWSLISELFATVETSRLNEAELSQPLCTAIQIAIVDLMFAAGVKLDAVVGHSSGEIAAAYASGIISAADAMAIAYYRGFHAKRSHGTGGKRGGMVAAELSYEAALQFCEKVEWAGRLVLAASNSPSSITLSGDLDAVQEAHAYFEKENIFSRLLRVDTAYHSHHMIPCAEPYLTSLKACNIQVSQARSDCIWISSVSGDVQSSSEEQGALTGEYWVDNMVKPVLFSQAVQCSIWNSGPFESIVEIGPHFALKGPTTQVMEAVLESSPPYLSFMRRGHGIETFSDGLGRLWSKLGPSSVDLTGYWKACSSSHIKFQMLKGLPAYAWDHDKVYWKEGRISRNHRLRKDVPHELLGRRTADDSDYELRWRNVLRLTEIPWIRGHKFQGQVLFPAAGYVTMALEASKALVGDRHVRLFELRDICIRKALVLEEDQSSLETVFSVKRLNADFGIHDENMDLLEAEFSCYVCADETVGTLEKTVSGRIIIHLGSGVDVKLPPAAHFCTDLSPVDLDRFYSTVEELGLSYQGLFKGLDHAERMLNHSHALAVWENHSMGAGSMVHPALLDVMFQAIFVASISPAAPSTLWTPYLPVSIDRIIVDPDHIPVYSHPEVRAHIQAYVTKSSASSIVGDIHLLDSNGIHNGIQVEGLSLKSVAEPTEENDRSIFSQTVWDTDIASGTDFLRDRKEDAQESKLIHAIERVALFHFRSLVEAITVEKAKTLAWHHQLFLKAVKANIETIRTGGNPVVRQEWLCDTRETIEDLRAQHPGQIDLNLMHAVSEKLISIVCGETQILEVMLQDDMLNDFYMRGRGFETMNNCIARAVQQIAHKHPRAKYLEIGAGTGGTTHRILDTIESAYTSYEYTDISSAFFEKASHKFDKHASKMVFKVLDIEKDVVDQGFENGAYDVVIAANVLHATRTLSGTMGHIRSLLKPGGYLIFMEVTGDQLRLLFLFGALPGWWLGAGEGRSLGPGVSTIAWDNILRNTGFSGVDDVFYDFPDRSRHTCSVMISQAVDDQLRLLRDPLAATGMPISEQVLIIGGDTSSVSQLAYDTKRLISPWASCVAINNIDGLDSRRLPSRFSVICLTELDKPLFSEIMSEQRLSNLQNLFATANVVFWITSGCNEGTPVANMMVGIGRALATELPHLTLQFLDVKTVERLKPSIVAQSFFRLVLAKPLVMAEKSMLWTTEPELVFDGDDILIPRVLPDKEMNNRFNAARRPISENLWKESTCIELSNADNSSAPALFEIKNTIRPGETTIDVKYSVCLGKRCTFVLGVVSGTSDTVLAISDTNASSVRISKEHVFFLPHDFSGNSATLLLDTANHVLAAKLLRCISPNSIALIYEPGVRLAAAIRHHAHENTVDVFPATSNREKCGEGWAFIHPHATERDIRTIIPRNTGCFINLSFKPPGALSRALLQQTIIHGPDCLSQIVSSADGFLLEAAFNWATTGLLSLDSVETVSVQSYVGTTRPSRDFPLVFDWTAPRLPVTVKPLEPKGLFLPDKTYLMIGMTGDLGRSLCRWMAEHGARYVVLTSRNAEVDSAWIESMAAIGATVKVYKMDVSNRKSVLGVYTTIKNSLPTIAGVCNAAMVLEDRLFANMTVGALSKVFEPKVEGSKVLDEIFHELNLDFFILFSSLTSILGNGGQSNYHAANLFMTSMCAQRRARGLAASVMHIGMVADIGYVARSDRHIENHLRKLQYHPMSETDMHYLFAEAVMSSRADHPGNWNIVSGIETFVDAPGVKLRPPHYHNPRFAHYVREENARKEDLRTDKTEKSVKELLEDAISEEDVTTVFQQAFLIKLERLTQLESHRIDANKSLLNLGVDSLSAVEIRNWFLQTVGVDIPVLKLLRGDTVSEISIDATKKYLAQRTS</sequence>
<accession>D9N1A1</accession>
<reference key="1">
    <citation type="journal article" date="2010" name="Mol. Plant Microbe Interact.">
        <title>ACTTS3 encoding a polyketide synthase is essential for the biosynthesis of ACT-toxin and pathogenicity in the tangerine pathotype of Alternaria alternata.</title>
        <authorList>
            <person name="Miyamoto Y."/>
            <person name="Masunaka A."/>
            <person name="Tsuge T."/>
            <person name="Yamamoto M."/>
            <person name="Ohtani K."/>
            <person name="Fukumoto T."/>
            <person name="Gomi K."/>
            <person name="Peever T.L."/>
            <person name="Tada Y."/>
            <person name="Ichimura K."/>
            <person name="Akimitsu K."/>
        </authorList>
    </citation>
    <scope>NUCLEOTIDE SEQUENCE [GENOMIC DNA]</scope>
    <scope>FUNCTION</scope>
    <scope>DOMAIN</scope>
    <scope>DISRUPTION PHENOTYPE</scope>
    <scope>PATHWAY</scope>
    <source>
        <strain>SH20</strain>
    </source>
</reference>
<reference key="2">
    <citation type="journal article" date="2000" name="Phytopathology">
        <title>Distribution and characterization of AKT homologs in the tangerine pathotype of Alternaria alternata.</title>
        <authorList>
            <person name="Masunaka A."/>
            <person name="Tanaka A."/>
            <person name="Tsuge T."/>
            <person name="Peever T.L."/>
            <person name="Timmer L.W."/>
            <person name="Yamamoto M."/>
            <person name="Yamamoto H."/>
            <person name="Akimitsu K."/>
        </authorList>
    </citation>
    <scope>FUNCTION</scope>
</reference>
<reference key="3">
    <citation type="journal article" date="2008" name="Mol. Plant Microbe Interact.">
        <title>Functional analysis of a multicopy host-selective ACT-toxin biosynthesis gene in the tangerine pathotype of Alternaria alternata using RNA silencing.</title>
        <authorList>
            <person name="Miyamoto Y."/>
            <person name="Masunaka A."/>
            <person name="Tsuge T."/>
            <person name="Yamamoto M."/>
            <person name="Ohtani K."/>
            <person name="Fukumoto T."/>
            <person name="Gomi K."/>
            <person name="Peever T.L."/>
            <person name="Akimitsu K."/>
        </authorList>
    </citation>
    <scope>FUNCTION</scope>
    <source>
        <strain>SH20</strain>
    </source>
</reference>
<reference key="4">
    <citation type="journal article" date="2009" name="Phytopathology">
        <title>Function of genes encoding acyl-CoA synthetase and enoyl-CoA hydratase for host-selective act-toxin biosynthesis in the tangerine pathotype of Alternaria alternata.</title>
        <authorList>
            <person name="Miyamoto M."/>
            <person name="Ishii Y."/>
            <person name="Honda A."/>
            <person name="Masunaka A."/>
            <person name="Tsuge T."/>
            <person name="Yamamoto M."/>
            <person name="Ohtani K."/>
            <person name="Fukumoto T."/>
            <person name="Gomi K."/>
            <person name="Peever T.L."/>
            <person name="Akimitsu K."/>
        </authorList>
    </citation>
    <scope>FUNCTION</scope>
    <source>
        <strain>SH20</strain>
    </source>
</reference>
<reference key="5">
    <citation type="journal article" date="2010" name="Phytopathology">
        <title>Role of the host-selective ACT-toxin synthesis gene ACTTS2 encoding an enoyl-reductase in pathogenicity of the tangerine pathotype of Alternaria alternata.</title>
        <authorList>
            <person name="Ajiro N."/>
            <person name="Miyamoto Y."/>
            <person name="Masunaka A."/>
            <person name="Tsuge T."/>
            <person name="Yamamoto M."/>
            <person name="Ohtani K."/>
            <person name="Fukumoto T."/>
            <person name="Gomi K."/>
            <person name="Peever T.L."/>
            <person name="Izumi Y."/>
            <person name="Tada Y."/>
            <person name="Akimitsu K."/>
        </authorList>
    </citation>
    <scope>FUNCTION</scope>
    <source>
        <strain>SH20</strain>
    </source>
</reference>
<reference key="6">
    <citation type="journal article" date="2013" name="FEMS Microbiol. Rev.">
        <title>Host-selective toxins produced by the plant pathogenic fungus Alternaria alternata.</title>
        <authorList>
            <person name="Tsuge T."/>
            <person name="Harimoto Y."/>
            <person name="Akimitsu K."/>
            <person name="Ohtani K."/>
            <person name="Kodama M."/>
            <person name="Akagi Y."/>
            <person name="Egusa M."/>
            <person name="Yamamoto M."/>
            <person name="Otani H."/>
        </authorList>
    </citation>
    <scope>REVIEW ON HOST-SELECTIVE TOXINS</scope>
</reference>
<reference key="7">
    <citation type="journal article" date="2018" name="Front. Microbiol.">
        <title>Csn5 is required for the conidiogenesis and pathogenesis of the Alternaria alternata tangerine pathotype.</title>
        <authorList>
            <person name="Wang M."/>
            <person name="Yang X."/>
            <person name="Ruan R."/>
            <person name="Fu H."/>
            <person name="Li H."/>
        </authorList>
    </citation>
    <scope>INDUCTION</scope>
</reference>
<keyword id="KW-0012">Acyltransferase</keyword>
<keyword id="KW-0489">Methyltransferase</keyword>
<keyword id="KW-0511">Multifunctional enzyme</keyword>
<keyword id="KW-0521">NADP</keyword>
<keyword id="KW-0560">Oxidoreductase</keyword>
<keyword id="KW-0596">Phosphopantetheine</keyword>
<keyword id="KW-0597">Phosphoprotein</keyword>
<keyword id="KW-0949">S-adenosyl-L-methionine</keyword>
<keyword id="KW-0808">Transferase</keyword>
<keyword id="KW-0843">Virulence</keyword>
<comment type="function">
    <text evidence="7 8 9 10 11 14">Highly reducing polyketide synthase; part of the gene clusters that mediate the biosynthesis of the host-selective toxins (HSTs) ACT-toxins responsible for brown spot of tangerine disease by the tangerine pathotype which affects tangerines and mandarins (PubMed:19271978). ACT-toxins consist of three moieties, 9,10-epoxy-8-hydroxy-9-methyl-decatrienoic acid (EDA), valine and a polyketide (PubMed:22846083). ACT-toxin I is toxic to both citrus and pear; toxin II the 5''-deoxy derivative of ACT-toxin I, is highly toxic to pear and slightly toxic to citrus (PubMed:22846083). On cellular level, ACT-toxins affect plasma membrane of susceptible cells and cause a sudden increase in loss of K(+) after a few minutes of toxin treatment (PubMed:22846083). The acyl-CoA ligase ACTT1, the hydrolase ACTT2, the enoyl-CoA hydratases ACTT3 and ACTT6, and the acyl-CoA synthetase ACTT5 are all involved in the biosynthesis of the AK-, AF- and ACT-toxin common 9,10-epoxy-8-hydroxy-9-methyl-decatrienoic acid (EDA) structural moiety (PubMed:18944496, PubMed:18986255, PubMed:19271978). The exact role of each enzyme, and of additional enzymes identified within the AF-toxin clusters have still to be determined (PubMed:18944496, PubMed:18986255, PubMed:19271978). On the other hand, ACTTS1 to ACTTS4 are specific to the tangerine pathotype (PubMed:22846083). The function of ACTTS3 is to elongate the polyketide chain portion of ACT-toxin that is unique to this toxin (PubMed:20192828). The enoyl-reductase ACTTS2 might complement the missing enoyl-reductase (ER) domain in ACTTS3 in the synthesis of the polyketide portion of ACT-toxin (PubMed:20055645). The roles of the nonribosomal peptide synthetases-related proteins ACTTS1 and ACTTS4 have also still not been elucidated (PubMed:22846083).</text>
</comment>
<comment type="cofactor">
    <cofactor evidence="1">
        <name>pantetheine 4'-phosphate</name>
        <dbReference type="ChEBI" id="CHEBI:47942"/>
    </cofactor>
    <text evidence="1">Binds 1 phosphopantetheine covalently.</text>
</comment>
<comment type="pathway">
    <text evidence="11">Mycotoxin biosynthesis.</text>
</comment>
<comment type="induction">
    <text evidence="12">Expression is positively regulated by CSN5 during infection.</text>
</comment>
<comment type="domain">
    <text evidence="16">Multidomain protein; including a ketosynthase (KS) that catalyzes repeated decarboxylative condensation to elongate the polyketide backbone; a malonyl-CoA:ACP transacylase (MAT) that selects and transfers the extender unit malonyl-CoA; a dehydratase (DH) domain that reduces hydroxyl groups to enoyl groups; a methyltransferase (CMeT) domain responsible for the incorporation of methyl groups; a ketoreductase (KR) domain that catalyzes beta-ketoreduction steps; and an acyl-carrier protein (ACP) that serves as the tether of the growing and completed polyketide via its phosphopantetheinyl arm.</text>
</comment>
<comment type="disruption phenotype">
    <text evidence="11">Abolishes the production of ACT-toxin and leads to the loss of pathogenicity (PubMed:20192828). Does not affect growth rate of cultures, sporulation, and spore germination (PubMed:20192828).</text>
</comment>
<comment type="miscellaneous">
    <text evidence="8">Gene clusters encoding host-selective toxins (HSTs) are localized on conditionally dispensable chromosomes (CDCs), also called supernumerary chromosomes, where they are present in multiple copies (PubMed:18986255). The CDCs are not essential for saprophytic growth but controls host-selective pathogenicity (PubMed:18986255). Although conventional disruption could not be accomplished due to the high number of the copies identified in the genome, the high sequence identity among these copies is likely an advantage for RNA silencing, because it allows knockdown of all copies of this gene simultaneously (PubMed:18986255).</text>
</comment>
<gene>
    <name evidence="13" type="primary">ACTTS3</name>
</gene>